<protein>
    <recommendedName>
        <fullName>HTH-type transcriptional regulator CueR</fullName>
    </recommendedName>
    <alternativeName>
        <fullName>Copper efflux regulator</fullName>
    </alternativeName>
    <alternativeName>
        <fullName>Copper export regulator</fullName>
    </alternativeName>
</protein>
<proteinExistence type="inferred from homology"/>
<dbReference type="EMBL" id="AE003852">
    <property type="protein sequence ID" value="AAF94136.1"/>
    <property type="molecule type" value="Genomic_DNA"/>
</dbReference>
<dbReference type="PIR" id="D82256">
    <property type="entry name" value="D82256"/>
</dbReference>
<dbReference type="RefSeq" id="NP_230621.1">
    <property type="nucleotide sequence ID" value="NC_002505.1"/>
</dbReference>
<dbReference type="RefSeq" id="WP_001027396.1">
    <property type="nucleotide sequence ID" value="NZ_LT906614.1"/>
</dbReference>
<dbReference type="SMR" id="P0C6D2"/>
<dbReference type="STRING" id="243277.VC_0974"/>
<dbReference type="DNASU" id="2614227"/>
<dbReference type="EnsemblBacteria" id="AAF94136">
    <property type="protein sequence ID" value="AAF94136"/>
    <property type="gene ID" value="VC_0974"/>
</dbReference>
<dbReference type="KEGG" id="vch:VC_0974"/>
<dbReference type="PATRIC" id="fig|243277.26.peg.927"/>
<dbReference type="eggNOG" id="COG0789">
    <property type="taxonomic scope" value="Bacteria"/>
</dbReference>
<dbReference type="HOGENOM" id="CLU_060077_2_0_6"/>
<dbReference type="Proteomes" id="UP000000584">
    <property type="component" value="Chromosome 1"/>
</dbReference>
<dbReference type="GO" id="GO:0005737">
    <property type="term" value="C:cytoplasm"/>
    <property type="evidence" value="ECO:0007669"/>
    <property type="project" value="UniProtKB-SubCell"/>
</dbReference>
<dbReference type="GO" id="GO:0005507">
    <property type="term" value="F:copper ion binding"/>
    <property type="evidence" value="ECO:0007669"/>
    <property type="project" value="InterPro"/>
</dbReference>
<dbReference type="GO" id="GO:0003677">
    <property type="term" value="F:DNA binding"/>
    <property type="evidence" value="ECO:0007669"/>
    <property type="project" value="UniProtKB-KW"/>
</dbReference>
<dbReference type="GO" id="GO:0003700">
    <property type="term" value="F:DNA-binding transcription factor activity"/>
    <property type="evidence" value="ECO:0000318"/>
    <property type="project" value="GO_Central"/>
</dbReference>
<dbReference type="GO" id="GO:0045893">
    <property type="term" value="P:positive regulation of DNA-templated transcription"/>
    <property type="evidence" value="ECO:0000318"/>
    <property type="project" value="GO_Central"/>
</dbReference>
<dbReference type="CDD" id="cd01108">
    <property type="entry name" value="HTH_CueR"/>
    <property type="match status" value="1"/>
</dbReference>
<dbReference type="Gene3D" id="1.10.1660.10">
    <property type="match status" value="1"/>
</dbReference>
<dbReference type="InterPro" id="IPR011789">
    <property type="entry name" value="CueR"/>
</dbReference>
<dbReference type="InterPro" id="IPR009061">
    <property type="entry name" value="DNA-bd_dom_put_sf"/>
</dbReference>
<dbReference type="InterPro" id="IPR000551">
    <property type="entry name" value="MerR-type_HTH_dom"/>
</dbReference>
<dbReference type="InterPro" id="IPR047057">
    <property type="entry name" value="MerR_fam"/>
</dbReference>
<dbReference type="NCBIfam" id="TIGR02044">
    <property type="entry name" value="CueR"/>
    <property type="match status" value="1"/>
</dbReference>
<dbReference type="PANTHER" id="PTHR30204:SF16">
    <property type="entry name" value="HTH-TYPE TRANSCRIPTIONAL REGULATOR CUER"/>
    <property type="match status" value="1"/>
</dbReference>
<dbReference type="PANTHER" id="PTHR30204">
    <property type="entry name" value="REDOX-CYCLING DRUG-SENSING TRANSCRIPTIONAL ACTIVATOR SOXR"/>
    <property type="match status" value="1"/>
</dbReference>
<dbReference type="Pfam" id="PF13411">
    <property type="entry name" value="MerR_1"/>
    <property type="match status" value="1"/>
</dbReference>
<dbReference type="SMART" id="SM00422">
    <property type="entry name" value="HTH_MERR"/>
    <property type="match status" value="1"/>
</dbReference>
<dbReference type="SUPFAM" id="SSF46955">
    <property type="entry name" value="Putative DNA-binding domain"/>
    <property type="match status" value="1"/>
</dbReference>
<dbReference type="PROSITE" id="PS00552">
    <property type="entry name" value="HTH_MERR_1"/>
    <property type="match status" value="1"/>
</dbReference>
<dbReference type="PROSITE" id="PS50937">
    <property type="entry name" value="HTH_MERR_2"/>
    <property type="match status" value="1"/>
</dbReference>
<gene>
    <name type="primary">cueR</name>
    <name type="synonym">vvgR</name>
    <name type="ordered locus">VC_0974</name>
</gene>
<evidence type="ECO:0000250" key="1"/>
<evidence type="ECO:0000255" key="2">
    <source>
        <dbReference type="PROSITE-ProRule" id="PRU00254"/>
    </source>
</evidence>
<evidence type="ECO:0000305" key="3"/>
<sequence length="139" mass="15693">MNISQIAKLTSLTAKSIRLYEEKGLIIPPLRSESGYRTYTQQHVDDLLLIARCRRVGFSLDECKAMLTLANDPNRTSAAVRARAQEKWQEISRKLSELTMIKQQLEEWIASCPGDQGSDCPIIEQLKGHCCSNNKTKTP</sequence>
<comment type="function">
    <text evidence="1">Regulates the transcription of the copA and cueO genes. It detects cytoplasmic copper stress and activates transcription in response to increasing copper concentrations (By similarity).</text>
</comment>
<comment type="subunit">
    <text evidence="1">Homodimer.</text>
</comment>
<comment type="subcellular location">
    <subcellularLocation>
        <location evidence="3">Cytoplasm</location>
    </subcellularLocation>
</comment>
<comment type="domain">
    <text evidence="1">It contains a N-terminal DNA binding region and a C-terminal metal binding region.</text>
</comment>
<feature type="chain" id="PRO_0000098117" description="HTH-type transcriptional regulator CueR">
    <location>
        <begin position="1"/>
        <end position="139"/>
    </location>
</feature>
<feature type="domain" description="HTH merR-type" evidence="2">
    <location>
        <begin position="1"/>
        <end position="69"/>
    </location>
</feature>
<feature type="DNA-binding region" description="H-T-H motif" evidence="2">
    <location>
        <begin position="4"/>
        <end position="23"/>
    </location>
</feature>
<feature type="binding site" evidence="1">
    <location>
        <position position="112"/>
    </location>
    <ligand>
        <name>Cu(+)</name>
        <dbReference type="ChEBI" id="CHEBI:49552"/>
    </ligand>
</feature>
<feature type="binding site" evidence="1">
    <location>
        <position position="120"/>
    </location>
    <ligand>
        <name>Cu(+)</name>
        <dbReference type="ChEBI" id="CHEBI:49552"/>
    </ligand>
</feature>
<keyword id="KW-0010">Activator</keyword>
<keyword id="KW-0186">Copper</keyword>
<keyword id="KW-0963">Cytoplasm</keyword>
<keyword id="KW-0238">DNA-binding</keyword>
<keyword id="KW-0479">Metal-binding</keyword>
<keyword id="KW-1185">Reference proteome</keyword>
<keyword id="KW-0804">Transcription</keyword>
<keyword id="KW-0805">Transcription regulation</keyword>
<organism>
    <name type="scientific">Vibrio cholerae serotype O1 (strain ATCC 39315 / El Tor Inaba N16961)</name>
    <dbReference type="NCBI Taxonomy" id="243277"/>
    <lineage>
        <taxon>Bacteria</taxon>
        <taxon>Pseudomonadati</taxon>
        <taxon>Pseudomonadota</taxon>
        <taxon>Gammaproteobacteria</taxon>
        <taxon>Vibrionales</taxon>
        <taxon>Vibrionaceae</taxon>
        <taxon>Vibrio</taxon>
    </lineage>
</organism>
<accession>P0C6D2</accession>
<accession>Q9EVT1</accession>
<accession>Q9KTC8</accession>
<reference key="1">
    <citation type="journal article" date="2000" name="Nature">
        <title>DNA sequence of both chromosomes of the cholera pathogen Vibrio cholerae.</title>
        <authorList>
            <person name="Heidelberg J.F."/>
            <person name="Eisen J.A."/>
            <person name="Nelson W.C."/>
            <person name="Clayton R.A."/>
            <person name="Gwinn M.L."/>
            <person name="Dodson R.J."/>
            <person name="Haft D.H."/>
            <person name="Hickey E.K."/>
            <person name="Peterson J.D."/>
            <person name="Umayam L.A."/>
            <person name="Gill S.R."/>
            <person name="Nelson K.E."/>
            <person name="Read T.D."/>
            <person name="Tettelin H."/>
            <person name="Richardson D.L."/>
            <person name="Ermolaeva M.D."/>
            <person name="Vamathevan J.J."/>
            <person name="Bass S."/>
            <person name="Qin H."/>
            <person name="Dragoi I."/>
            <person name="Sellers P."/>
            <person name="McDonald L.A."/>
            <person name="Utterback T.R."/>
            <person name="Fleischmann R.D."/>
            <person name="Nierman W.C."/>
            <person name="White O."/>
            <person name="Salzberg S.L."/>
            <person name="Smith H.O."/>
            <person name="Colwell R.R."/>
            <person name="Mekalanos J.J."/>
            <person name="Venter J.C."/>
            <person name="Fraser C.M."/>
        </authorList>
    </citation>
    <scope>NUCLEOTIDE SEQUENCE [LARGE SCALE GENOMIC DNA]</scope>
    <source>
        <strain>ATCC 39315 / El Tor Inaba N16961</strain>
    </source>
</reference>
<name>CUER_VIBCH</name>